<proteinExistence type="inferred from homology"/>
<gene>
    <name type="primary">DEF1</name>
    <name type="ORF">CLUG_02122</name>
</gene>
<keyword id="KW-0158">Chromosome</keyword>
<keyword id="KW-0963">Cytoplasm</keyword>
<keyword id="KW-0227">DNA damage</keyword>
<keyword id="KW-0234">DNA repair</keyword>
<keyword id="KW-0238">DNA-binding</keyword>
<keyword id="KW-0539">Nucleus</keyword>
<keyword id="KW-1185">Reference proteome</keyword>
<keyword id="KW-0779">Telomere</keyword>
<keyword id="KW-0832">Ubl conjugation</keyword>
<keyword id="KW-0833">Ubl conjugation pathway</keyword>
<name>DEF1_CLAL4</name>
<organism>
    <name type="scientific">Clavispora lusitaniae (strain ATCC 42720)</name>
    <name type="common">Yeast</name>
    <name type="synonym">Candida lusitaniae</name>
    <dbReference type="NCBI Taxonomy" id="306902"/>
    <lineage>
        <taxon>Eukaryota</taxon>
        <taxon>Fungi</taxon>
        <taxon>Dikarya</taxon>
        <taxon>Ascomycota</taxon>
        <taxon>Saccharomycotina</taxon>
        <taxon>Pichiomycetes</taxon>
        <taxon>Metschnikowiaceae</taxon>
        <taxon>Clavispora</taxon>
    </lineage>
</organism>
<sequence length="671" mass="72398">MSQRKNHRGQQKKAAASPSKSAASSQLQTLSEMFPAWEADELAALLSEHHDDVEIVIDLIVNNKVSKWEPIKKEPKPKKREEVITDSNATQTSHAHNDAKPKHSRERPKNEKRRERKPVQRKEPSAAVQAAQAASPAPAAAASTSSTSSASVPSNSWAAALSKDAKPKQKKEEPEVKEPAQEQEQPKEEQEPAVAAATAAAASAASAPQETQAAPAAPAAPVAPTTTTTNDHAEKPATTWASAIKPKAKPIKKKAPEHVPEEEVSEVVVVETEVSDVVLPQQVAEVGVSFGSLALETEDVPESQPEAQPKPEAQPESQPEPEVQPEAEPEIQQEPVQQEQVQPQQVQQQVQSQPEQPQQPVPVQTQEQPQQPQQPQQPQQPQQPQAQQPQQPQQPQQPQQPQQQPQQQGQQPPHFEKPAQGYDYYPQFQQTQQYQQAAGSVPGQYAYPSFDYSAAYGQLGQAGLGSVASPGYYPAAVNGAAKPAAPAPASAEIGQSPLVQPNNMGQQSMQSGQAQVPGAAPFGYPNYYNYFYNTPFYGNGGMAASTTSYGAQQQPQSQQAAGENAPASGEPETNGVPAQAQANNQYYAQYYGQPNQFGSRGGYPYSGYPASQPYPQSAGQEQPEGAQPSAPQGAPVPGVPSYPQQMPQYGAYQQFPQYGSYQDSNQYRGWY</sequence>
<evidence type="ECO:0000250" key="1">
    <source>
        <dbReference type="UniProtKB" id="P35732"/>
    </source>
</evidence>
<evidence type="ECO:0000255" key="2">
    <source>
        <dbReference type="PROSITE-ProRule" id="PRU00468"/>
    </source>
</evidence>
<evidence type="ECO:0000256" key="3">
    <source>
        <dbReference type="SAM" id="MobiDB-lite"/>
    </source>
</evidence>
<evidence type="ECO:0000305" key="4"/>
<dbReference type="EMBL" id="CH408077">
    <property type="protein sequence ID" value="EEQ37999.1"/>
    <property type="molecule type" value="Genomic_DNA"/>
</dbReference>
<dbReference type="RefSeq" id="XP_002618663.1">
    <property type="nucleotide sequence ID" value="XM_002618617.1"/>
</dbReference>
<dbReference type="SMR" id="C4Y1P0"/>
<dbReference type="GeneID" id="8499323"/>
<dbReference type="KEGG" id="clu:CLUG_02122"/>
<dbReference type="VEuPathDB" id="FungiDB:CLUG_02122"/>
<dbReference type="HOGENOM" id="CLU_438800_0_0_1"/>
<dbReference type="InParanoid" id="C4Y1P0"/>
<dbReference type="OMA" id="MYQNQFP"/>
<dbReference type="OrthoDB" id="125312at4891"/>
<dbReference type="Proteomes" id="UP000007703">
    <property type="component" value="Unassembled WGS sequence"/>
</dbReference>
<dbReference type="GO" id="GO:0000781">
    <property type="term" value="C:chromosome, telomeric region"/>
    <property type="evidence" value="ECO:0007669"/>
    <property type="project" value="UniProtKB-SubCell"/>
</dbReference>
<dbReference type="GO" id="GO:0005737">
    <property type="term" value="C:cytoplasm"/>
    <property type="evidence" value="ECO:0007669"/>
    <property type="project" value="UniProtKB-SubCell"/>
</dbReference>
<dbReference type="GO" id="GO:0005634">
    <property type="term" value="C:nucleus"/>
    <property type="evidence" value="ECO:0007669"/>
    <property type="project" value="UniProtKB-SubCell"/>
</dbReference>
<dbReference type="GO" id="GO:0003677">
    <property type="term" value="F:DNA binding"/>
    <property type="evidence" value="ECO:0007669"/>
    <property type="project" value="UniProtKB-KW"/>
</dbReference>
<dbReference type="GO" id="GO:0043130">
    <property type="term" value="F:ubiquitin binding"/>
    <property type="evidence" value="ECO:0007669"/>
    <property type="project" value="InterPro"/>
</dbReference>
<dbReference type="GO" id="GO:0006281">
    <property type="term" value="P:DNA repair"/>
    <property type="evidence" value="ECO:0007669"/>
    <property type="project" value="UniProtKB-KW"/>
</dbReference>
<dbReference type="InterPro" id="IPR003892">
    <property type="entry name" value="CUE"/>
</dbReference>
<dbReference type="Pfam" id="PF02845">
    <property type="entry name" value="CUE"/>
    <property type="match status" value="1"/>
</dbReference>
<dbReference type="PROSITE" id="PS51140">
    <property type="entry name" value="CUE"/>
    <property type="match status" value="1"/>
</dbReference>
<comment type="function">
    <text evidence="1">Recruits the ubiquitination machinery to RNA polymerase II for polyubiquitination, removal and degradation, when the transcription-coupled repair (TCR) factor RAD26 fails to efficiently displace stalled RNA polymerase II. Also involved in telomere length regulation. Binds DNA.</text>
</comment>
<comment type="subunit">
    <text evidence="1">Homodimer; may form higher order oligomers. Interacts with the large RNA polymerase II subunit RPO21; the interaction is direct and serves to bridge RPO21 to the Elongin complex in a manner dependent on transcription stress. Interacts with RAD26.</text>
</comment>
<comment type="subcellular location">
    <subcellularLocation>
        <location evidence="1">Cytoplasm</location>
    </subcellularLocation>
    <subcellularLocation>
        <location evidence="1">Nucleus</location>
    </subcellularLocation>
    <subcellularLocation>
        <location evidence="1">Chromosome</location>
        <location evidence="1">Telomere</location>
    </subcellularLocation>
    <text evidence="1">During transcription stress, localizes to the nucleus following proteolytic cleavage by the proteasome.</text>
</comment>
<comment type="PTM">
    <text evidence="1">Ubiquitinated.</text>
</comment>
<comment type="PTM">
    <text evidence="1">Proteolytically cleaved by the proteasome in response to transcription stress; the resulting N-terminal form constitutes the activated nuclear form and the C-terminal portion is degraded.</text>
</comment>
<comment type="similarity">
    <text evidence="4">Belongs to the DEF1 family.</text>
</comment>
<accession>C4Y1P0</accession>
<feature type="chain" id="PRO_0000405666" description="RNA polymerase II degradation factor 1">
    <location>
        <begin position="1"/>
        <end position="671"/>
    </location>
</feature>
<feature type="domain" description="CUE" evidence="2">
    <location>
        <begin position="22"/>
        <end position="65"/>
    </location>
</feature>
<feature type="region of interest" description="Disordered" evidence="3">
    <location>
        <begin position="1"/>
        <end position="27"/>
    </location>
</feature>
<feature type="region of interest" description="Disordered" evidence="3">
    <location>
        <begin position="66"/>
        <end position="266"/>
    </location>
</feature>
<feature type="region of interest" description="Disordered" evidence="3">
    <location>
        <begin position="294"/>
        <end position="439"/>
    </location>
</feature>
<feature type="region of interest" description="Disordered" evidence="3">
    <location>
        <begin position="480"/>
        <end position="516"/>
    </location>
</feature>
<feature type="region of interest" description="Disordered" evidence="3">
    <location>
        <begin position="546"/>
        <end position="577"/>
    </location>
</feature>
<feature type="region of interest" description="Disordered" evidence="3">
    <location>
        <begin position="601"/>
        <end position="651"/>
    </location>
</feature>
<feature type="compositionally biased region" description="Basic residues" evidence="3">
    <location>
        <begin position="1"/>
        <end position="11"/>
    </location>
</feature>
<feature type="compositionally biased region" description="Low complexity" evidence="3">
    <location>
        <begin position="12"/>
        <end position="26"/>
    </location>
</feature>
<feature type="compositionally biased region" description="Basic and acidic residues" evidence="3">
    <location>
        <begin position="66"/>
        <end position="83"/>
    </location>
</feature>
<feature type="compositionally biased region" description="Polar residues" evidence="3">
    <location>
        <begin position="85"/>
        <end position="94"/>
    </location>
</feature>
<feature type="compositionally biased region" description="Basic and acidic residues" evidence="3">
    <location>
        <begin position="95"/>
        <end position="124"/>
    </location>
</feature>
<feature type="compositionally biased region" description="Low complexity" evidence="3">
    <location>
        <begin position="125"/>
        <end position="160"/>
    </location>
</feature>
<feature type="compositionally biased region" description="Basic and acidic residues" evidence="3">
    <location>
        <begin position="163"/>
        <end position="190"/>
    </location>
</feature>
<feature type="compositionally biased region" description="Low complexity" evidence="3">
    <location>
        <begin position="192"/>
        <end position="229"/>
    </location>
</feature>
<feature type="compositionally biased region" description="Low complexity" evidence="3">
    <location>
        <begin position="302"/>
        <end position="322"/>
    </location>
</feature>
<feature type="compositionally biased region" description="Low complexity" evidence="3">
    <location>
        <begin position="332"/>
        <end position="413"/>
    </location>
</feature>
<feature type="compositionally biased region" description="Low complexity" evidence="3">
    <location>
        <begin position="422"/>
        <end position="436"/>
    </location>
</feature>
<feature type="compositionally biased region" description="Low complexity" evidence="3">
    <location>
        <begin position="480"/>
        <end position="491"/>
    </location>
</feature>
<feature type="compositionally biased region" description="Low complexity" evidence="3">
    <location>
        <begin position="502"/>
        <end position="513"/>
    </location>
</feature>
<feature type="compositionally biased region" description="Low complexity" evidence="3">
    <location>
        <begin position="551"/>
        <end position="561"/>
    </location>
</feature>
<feature type="compositionally biased region" description="Low complexity" evidence="3">
    <location>
        <begin position="602"/>
        <end position="617"/>
    </location>
</feature>
<reference key="1">
    <citation type="journal article" date="2009" name="Nature">
        <title>Evolution of pathogenicity and sexual reproduction in eight Candida genomes.</title>
        <authorList>
            <person name="Butler G."/>
            <person name="Rasmussen M.D."/>
            <person name="Lin M.F."/>
            <person name="Santos M.A.S."/>
            <person name="Sakthikumar S."/>
            <person name="Munro C.A."/>
            <person name="Rheinbay E."/>
            <person name="Grabherr M."/>
            <person name="Forche A."/>
            <person name="Reedy J.L."/>
            <person name="Agrafioti I."/>
            <person name="Arnaud M.B."/>
            <person name="Bates S."/>
            <person name="Brown A.J.P."/>
            <person name="Brunke S."/>
            <person name="Costanzo M.C."/>
            <person name="Fitzpatrick D.A."/>
            <person name="de Groot P.W.J."/>
            <person name="Harris D."/>
            <person name="Hoyer L.L."/>
            <person name="Hube B."/>
            <person name="Klis F.M."/>
            <person name="Kodira C."/>
            <person name="Lennard N."/>
            <person name="Logue M.E."/>
            <person name="Martin R."/>
            <person name="Neiman A.M."/>
            <person name="Nikolaou E."/>
            <person name="Quail M.A."/>
            <person name="Quinn J."/>
            <person name="Santos M.C."/>
            <person name="Schmitzberger F.F."/>
            <person name="Sherlock G."/>
            <person name="Shah P."/>
            <person name="Silverstein K.A.T."/>
            <person name="Skrzypek M.S."/>
            <person name="Soll D."/>
            <person name="Staggs R."/>
            <person name="Stansfield I."/>
            <person name="Stumpf M.P.H."/>
            <person name="Sudbery P.E."/>
            <person name="Srikantha T."/>
            <person name="Zeng Q."/>
            <person name="Berman J."/>
            <person name="Berriman M."/>
            <person name="Heitman J."/>
            <person name="Gow N.A.R."/>
            <person name="Lorenz M.C."/>
            <person name="Birren B.W."/>
            <person name="Kellis M."/>
            <person name="Cuomo C.A."/>
        </authorList>
    </citation>
    <scope>NUCLEOTIDE SEQUENCE [LARGE SCALE GENOMIC DNA]</scope>
    <source>
        <strain>ATCC 42720</strain>
    </source>
</reference>
<protein>
    <recommendedName>
        <fullName>RNA polymerase II degradation factor 1</fullName>
    </recommendedName>
</protein>